<organism>
    <name type="scientific">Blochmanniella floridana</name>
    <dbReference type="NCBI Taxonomy" id="203907"/>
    <lineage>
        <taxon>Bacteria</taxon>
        <taxon>Pseudomonadati</taxon>
        <taxon>Pseudomonadota</taxon>
        <taxon>Gammaproteobacteria</taxon>
        <taxon>Enterobacterales</taxon>
        <taxon>Enterobacteriaceae</taxon>
        <taxon>ant endosymbionts</taxon>
        <taxon>Candidatus Blochmanniella</taxon>
    </lineage>
</organism>
<reference key="1">
    <citation type="journal article" date="2003" name="Proc. Natl. Acad. Sci. U.S.A.">
        <title>The genome sequence of Blochmannia floridanus: comparative analysis of reduced genomes.</title>
        <authorList>
            <person name="Gil R."/>
            <person name="Silva F.J."/>
            <person name="Zientz E."/>
            <person name="Delmotte F."/>
            <person name="Gonzalez-Candelas F."/>
            <person name="Latorre A."/>
            <person name="Rausell C."/>
            <person name="Kamerbeek J."/>
            <person name="Gadau J."/>
            <person name="Hoelldobler B."/>
            <person name="van Ham R.C.H.J."/>
            <person name="Gross R."/>
            <person name="Moya A."/>
        </authorList>
    </citation>
    <scope>NUCLEOTIDE SEQUENCE [LARGE SCALE GENOMIC DNA]</scope>
</reference>
<sequence>MGKIIGVDLGTTNSCVAIIESNKPRVLENSEGDRTTPSVVAYTQDGEILVGQPAKRQSVTNPKNTLFAIKRLIGRRFQDQEVQRDVKIMPYKIISSNNGDAWLDIKGQKIAPPQISAEILKKMKKTAEDYLGENVTEAVITVPAYFNDAQRQATKDAGRIAGLEVKRIINEPTAAALAYGLDKEAHGNRIIAVYDLGGGTFDISIIEIDNVDGEKTFEVLATNGDTHLGGEDFDSLLINYLVEEFKKDQGIDLYNDPLAMQRLKESAEKSKIELSTSQQTDVNLPYITADSTGPKHMNLRVTRAKLESLVEDLVNRTLDPLKTALKDANLSVSSVNDVILVGGQTRMPLVQKKVSEFFNKEPRKDVNPDEAVAIGAAVQGGVLSGDVKDVLLLDVTPLSLGIETMGGVMTSLIAKNTTIPTKHSQVFSTAEDNQSAVTIHVLQGERKRASDNKSLGQFNLDGIAPAMRGIPQIEVTFDIDADGILHVSAKDKNSGREQKITIKASSGLNEEEIKKMVQEAEANAESDRKFEELVQIRNQADHLLHSTRKQLKEVGDRISLDDKNSIEQSLKELELVMKNENKGDIESKVQELIKVSGKLLEASSQKYKEKVNDSKSDLNKDKSETDASGDVVDAEFEEIKNKK</sequence>
<name>DNAK_BLOFL</name>
<proteinExistence type="inferred from homology"/>
<protein>
    <recommendedName>
        <fullName evidence="1">Chaperone protein DnaK</fullName>
    </recommendedName>
    <alternativeName>
        <fullName evidence="1">HSP70</fullName>
    </alternativeName>
    <alternativeName>
        <fullName evidence="1">Heat shock 70 kDa protein</fullName>
    </alternativeName>
    <alternativeName>
        <fullName evidence="1">Heat shock protein 70</fullName>
    </alternativeName>
</protein>
<evidence type="ECO:0000255" key="1">
    <source>
        <dbReference type="HAMAP-Rule" id="MF_00332"/>
    </source>
</evidence>
<evidence type="ECO:0000256" key="2">
    <source>
        <dbReference type="SAM" id="MobiDB-lite"/>
    </source>
</evidence>
<accession>Q7VQL4</accession>
<dbReference type="EMBL" id="BX248583">
    <property type="protein sequence ID" value="CAD83635.1"/>
    <property type="molecule type" value="Genomic_DNA"/>
</dbReference>
<dbReference type="SMR" id="Q7VQL4"/>
<dbReference type="STRING" id="203907.Bfl114"/>
<dbReference type="KEGG" id="bfl:Bfl114"/>
<dbReference type="eggNOG" id="COG0443">
    <property type="taxonomic scope" value="Bacteria"/>
</dbReference>
<dbReference type="HOGENOM" id="CLU_005965_2_1_6"/>
<dbReference type="OrthoDB" id="9766019at2"/>
<dbReference type="Proteomes" id="UP000002192">
    <property type="component" value="Chromosome"/>
</dbReference>
<dbReference type="GO" id="GO:0005524">
    <property type="term" value="F:ATP binding"/>
    <property type="evidence" value="ECO:0007669"/>
    <property type="project" value="UniProtKB-UniRule"/>
</dbReference>
<dbReference type="GO" id="GO:0140662">
    <property type="term" value="F:ATP-dependent protein folding chaperone"/>
    <property type="evidence" value="ECO:0007669"/>
    <property type="project" value="InterPro"/>
</dbReference>
<dbReference type="GO" id="GO:0051082">
    <property type="term" value="F:unfolded protein binding"/>
    <property type="evidence" value="ECO:0007669"/>
    <property type="project" value="InterPro"/>
</dbReference>
<dbReference type="CDD" id="cd10234">
    <property type="entry name" value="ASKHA_NBD_HSP70_DnaK-like"/>
    <property type="match status" value="1"/>
</dbReference>
<dbReference type="FunFam" id="2.60.34.10:FF:000014">
    <property type="entry name" value="Chaperone protein DnaK HSP70"/>
    <property type="match status" value="1"/>
</dbReference>
<dbReference type="FunFam" id="3.30.30.30:FF:000003">
    <property type="entry name" value="Heat shock protein 9"/>
    <property type="match status" value="1"/>
</dbReference>
<dbReference type="FunFam" id="1.20.1270.10:FF:000001">
    <property type="entry name" value="Molecular chaperone DnaK"/>
    <property type="match status" value="1"/>
</dbReference>
<dbReference type="FunFam" id="3.30.420.40:FF:000004">
    <property type="entry name" value="Molecular chaperone DnaK"/>
    <property type="match status" value="1"/>
</dbReference>
<dbReference type="FunFam" id="3.90.640.10:FF:000003">
    <property type="entry name" value="Molecular chaperone DnaK"/>
    <property type="match status" value="1"/>
</dbReference>
<dbReference type="Gene3D" id="1.20.1270.10">
    <property type="match status" value="1"/>
</dbReference>
<dbReference type="Gene3D" id="3.30.420.40">
    <property type="match status" value="2"/>
</dbReference>
<dbReference type="Gene3D" id="3.90.640.10">
    <property type="entry name" value="Actin, Chain A, domain 4"/>
    <property type="match status" value="1"/>
</dbReference>
<dbReference type="Gene3D" id="2.60.34.10">
    <property type="entry name" value="Substrate Binding Domain Of DNAk, Chain A, domain 1"/>
    <property type="match status" value="1"/>
</dbReference>
<dbReference type="HAMAP" id="MF_00332">
    <property type="entry name" value="DnaK"/>
    <property type="match status" value="1"/>
</dbReference>
<dbReference type="InterPro" id="IPR043129">
    <property type="entry name" value="ATPase_NBD"/>
</dbReference>
<dbReference type="InterPro" id="IPR012725">
    <property type="entry name" value="Chaperone_DnaK"/>
</dbReference>
<dbReference type="InterPro" id="IPR018181">
    <property type="entry name" value="Heat_shock_70_CS"/>
</dbReference>
<dbReference type="InterPro" id="IPR029048">
    <property type="entry name" value="HSP70_C_sf"/>
</dbReference>
<dbReference type="InterPro" id="IPR029047">
    <property type="entry name" value="HSP70_peptide-bd_sf"/>
</dbReference>
<dbReference type="InterPro" id="IPR013126">
    <property type="entry name" value="Hsp_70_fam"/>
</dbReference>
<dbReference type="NCBIfam" id="NF001413">
    <property type="entry name" value="PRK00290.1"/>
    <property type="match status" value="1"/>
</dbReference>
<dbReference type="NCBIfam" id="NF003520">
    <property type="entry name" value="PRK05183.1"/>
    <property type="match status" value="1"/>
</dbReference>
<dbReference type="NCBIfam" id="TIGR02350">
    <property type="entry name" value="prok_dnaK"/>
    <property type="match status" value="1"/>
</dbReference>
<dbReference type="PANTHER" id="PTHR19375">
    <property type="entry name" value="HEAT SHOCK PROTEIN 70KDA"/>
    <property type="match status" value="1"/>
</dbReference>
<dbReference type="Pfam" id="PF00012">
    <property type="entry name" value="HSP70"/>
    <property type="match status" value="1"/>
</dbReference>
<dbReference type="PRINTS" id="PR00301">
    <property type="entry name" value="HEATSHOCK70"/>
</dbReference>
<dbReference type="SUPFAM" id="SSF53067">
    <property type="entry name" value="Actin-like ATPase domain"/>
    <property type="match status" value="2"/>
</dbReference>
<dbReference type="SUPFAM" id="SSF100920">
    <property type="entry name" value="Heat shock protein 70kD (HSP70), peptide-binding domain"/>
    <property type="match status" value="1"/>
</dbReference>
<dbReference type="PROSITE" id="PS00297">
    <property type="entry name" value="HSP70_1"/>
    <property type="match status" value="1"/>
</dbReference>
<dbReference type="PROSITE" id="PS00329">
    <property type="entry name" value="HSP70_2"/>
    <property type="match status" value="1"/>
</dbReference>
<dbReference type="PROSITE" id="PS01036">
    <property type="entry name" value="HSP70_3"/>
    <property type="match status" value="1"/>
</dbReference>
<comment type="function">
    <text evidence="1">Acts as a chaperone.</text>
</comment>
<comment type="induction">
    <text evidence="1">By stress conditions e.g. heat shock.</text>
</comment>
<comment type="similarity">
    <text evidence="1">Belongs to the heat shock protein 70 family.</text>
</comment>
<keyword id="KW-0067">ATP-binding</keyword>
<keyword id="KW-0143">Chaperone</keyword>
<keyword id="KW-0547">Nucleotide-binding</keyword>
<keyword id="KW-0597">Phosphoprotein</keyword>
<keyword id="KW-1185">Reference proteome</keyword>
<keyword id="KW-0346">Stress response</keyword>
<feature type="chain" id="PRO_0000078439" description="Chaperone protein DnaK">
    <location>
        <begin position="1"/>
        <end position="643"/>
    </location>
</feature>
<feature type="region of interest" description="Disordered" evidence="2">
    <location>
        <begin position="605"/>
        <end position="643"/>
    </location>
</feature>
<feature type="compositionally biased region" description="Basic and acidic residues" evidence="2">
    <location>
        <begin position="606"/>
        <end position="625"/>
    </location>
</feature>
<feature type="modified residue" description="Phosphothreonine; by autocatalysis" evidence="1">
    <location>
        <position position="200"/>
    </location>
</feature>
<gene>
    <name evidence="1" type="primary">dnaK</name>
    <name type="ordered locus">Bfl114</name>
</gene>